<organism>
    <name type="scientific">Arabidopsis thaliana</name>
    <name type="common">Mouse-ear cress</name>
    <dbReference type="NCBI Taxonomy" id="3702"/>
    <lineage>
        <taxon>Eukaryota</taxon>
        <taxon>Viridiplantae</taxon>
        <taxon>Streptophyta</taxon>
        <taxon>Embryophyta</taxon>
        <taxon>Tracheophyta</taxon>
        <taxon>Spermatophyta</taxon>
        <taxon>Magnoliopsida</taxon>
        <taxon>eudicotyledons</taxon>
        <taxon>Gunneridae</taxon>
        <taxon>Pentapetalae</taxon>
        <taxon>rosids</taxon>
        <taxon>malvids</taxon>
        <taxon>Brassicales</taxon>
        <taxon>Brassicaceae</taxon>
        <taxon>Camelineae</taxon>
        <taxon>Arabidopsis</taxon>
    </lineage>
</organism>
<keyword id="KW-0496">Mitochondrion</keyword>
<keyword id="KW-1185">Reference proteome</keyword>
<keyword id="KW-0677">Repeat</keyword>
<keyword id="KW-0809">Transit peptide</keyword>
<name>PPR95_ARATH</name>
<comment type="subcellular location">
    <subcellularLocation>
        <location evidence="2">Mitochondrion</location>
    </subcellularLocation>
</comment>
<comment type="similarity">
    <text evidence="2">Belongs to the PPR family. P subfamily.</text>
</comment>
<comment type="online information" name="Pentatricopeptide repeat proteins">
    <link uri="https://ppr.plantenergy.uwa.edu.au"/>
</comment>
<evidence type="ECO:0000255" key="1"/>
<evidence type="ECO:0000305" key="2"/>
<gene>
    <name type="ordered locus">At1g62914</name>
    <name type="ORF">F16P17.6</name>
</gene>
<feature type="transit peptide" description="Mitochondrion" evidence="1">
    <location>
        <begin position="1"/>
        <end position="20"/>
    </location>
</feature>
<feature type="chain" id="PRO_0000342836" description="Pentatricopeptide repeat-containing protein At1g62914, mitochondrial">
    <location>
        <begin position="21"/>
        <end position="528"/>
    </location>
</feature>
<feature type="repeat" description="PPR 1">
    <location>
        <begin position="77"/>
        <end position="111"/>
    </location>
</feature>
<feature type="repeat" description="PPR 2">
    <location>
        <begin position="112"/>
        <end position="146"/>
    </location>
</feature>
<feature type="repeat" description="PPR 3">
    <location>
        <begin position="147"/>
        <end position="181"/>
    </location>
</feature>
<feature type="repeat" description="PPR 4">
    <location>
        <begin position="182"/>
        <end position="216"/>
    </location>
</feature>
<feature type="repeat" description="PPR 5">
    <location>
        <begin position="217"/>
        <end position="251"/>
    </location>
</feature>
<feature type="repeat" description="PPR 6">
    <location>
        <begin position="252"/>
        <end position="286"/>
    </location>
</feature>
<feature type="repeat" description="PPR 7">
    <location>
        <begin position="287"/>
        <end position="321"/>
    </location>
</feature>
<feature type="repeat" description="PPR 8">
    <location>
        <begin position="322"/>
        <end position="356"/>
    </location>
</feature>
<feature type="repeat" description="PPR 9">
    <location>
        <begin position="357"/>
        <end position="391"/>
    </location>
</feature>
<feature type="repeat" description="PPR 10">
    <location>
        <begin position="392"/>
        <end position="426"/>
    </location>
</feature>
<feature type="repeat" description="PPR 11">
    <location>
        <begin position="427"/>
        <end position="461"/>
    </location>
</feature>
<feature type="repeat" description="PPR 12">
    <location>
        <begin position="462"/>
        <end position="496"/>
    </location>
</feature>
<feature type="repeat" description="PPR 13">
    <location>
        <begin position="497"/>
        <end position="528"/>
    </location>
</feature>
<proteinExistence type="evidence at transcript level"/>
<reference key="1">
    <citation type="journal article" date="2000" name="Nature">
        <title>Sequence and analysis of chromosome 1 of the plant Arabidopsis thaliana.</title>
        <authorList>
            <person name="Theologis A."/>
            <person name="Ecker J.R."/>
            <person name="Palm C.J."/>
            <person name="Federspiel N.A."/>
            <person name="Kaul S."/>
            <person name="White O."/>
            <person name="Alonso J."/>
            <person name="Altafi H."/>
            <person name="Araujo R."/>
            <person name="Bowman C.L."/>
            <person name="Brooks S.Y."/>
            <person name="Buehler E."/>
            <person name="Chan A."/>
            <person name="Chao Q."/>
            <person name="Chen H."/>
            <person name="Cheuk R.F."/>
            <person name="Chin C.W."/>
            <person name="Chung M.K."/>
            <person name="Conn L."/>
            <person name="Conway A.B."/>
            <person name="Conway A.R."/>
            <person name="Creasy T.H."/>
            <person name="Dewar K."/>
            <person name="Dunn P."/>
            <person name="Etgu P."/>
            <person name="Feldblyum T.V."/>
            <person name="Feng J.-D."/>
            <person name="Fong B."/>
            <person name="Fujii C.Y."/>
            <person name="Gill J.E."/>
            <person name="Goldsmith A.D."/>
            <person name="Haas B."/>
            <person name="Hansen N.F."/>
            <person name="Hughes B."/>
            <person name="Huizar L."/>
            <person name="Hunter J.L."/>
            <person name="Jenkins J."/>
            <person name="Johnson-Hopson C."/>
            <person name="Khan S."/>
            <person name="Khaykin E."/>
            <person name="Kim C.J."/>
            <person name="Koo H.L."/>
            <person name="Kremenetskaia I."/>
            <person name="Kurtz D.B."/>
            <person name="Kwan A."/>
            <person name="Lam B."/>
            <person name="Langin-Hooper S."/>
            <person name="Lee A."/>
            <person name="Lee J.M."/>
            <person name="Lenz C.A."/>
            <person name="Li J.H."/>
            <person name="Li Y.-P."/>
            <person name="Lin X."/>
            <person name="Liu S.X."/>
            <person name="Liu Z.A."/>
            <person name="Luros J.S."/>
            <person name="Maiti R."/>
            <person name="Marziali A."/>
            <person name="Militscher J."/>
            <person name="Miranda M."/>
            <person name="Nguyen M."/>
            <person name="Nierman W.C."/>
            <person name="Osborne B.I."/>
            <person name="Pai G."/>
            <person name="Peterson J."/>
            <person name="Pham P.K."/>
            <person name="Rizzo M."/>
            <person name="Rooney T."/>
            <person name="Rowley D."/>
            <person name="Sakano H."/>
            <person name="Salzberg S.L."/>
            <person name="Schwartz J.R."/>
            <person name="Shinn P."/>
            <person name="Southwick A.M."/>
            <person name="Sun H."/>
            <person name="Tallon L.J."/>
            <person name="Tambunga G."/>
            <person name="Toriumi M.J."/>
            <person name="Town C.D."/>
            <person name="Utterback T."/>
            <person name="Van Aken S."/>
            <person name="Vaysberg M."/>
            <person name="Vysotskaia V.S."/>
            <person name="Walker M."/>
            <person name="Wu D."/>
            <person name="Yu G."/>
            <person name="Fraser C.M."/>
            <person name="Venter J.C."/>
            <person name="Davis R.W."/>
        </authorList>
    </citation>
    <scope>NUCLEOTIDE SEQUENCE [LARGE SCALE GENOMIC DNA]</scope>
    <source>
        <strain>cv. Columbia</strain>
    </source>
</reference>
<reference key="2">
    <citation type="journal article" date="2017" name="Plant J.">
        <title>Araport11: a complete reannotation of the Arabidopsis thaliana reference genome.</title>
        <authorList>
            <person name="Cheng C.Y."/>
            <person name="Krishnakumar V."/>
            <person name="Chan A.P."/>
            <person name="Thibaud-Nissen F."/>
            <person name="Schobel S."/>
            <person name="Town C.D."/>
        </authorList>
    </citation>
    <scope>GENOME REANNOTATION</scope>
    <source>
        <strain>cv. Columbia</strain>
    </source>
</reference>
<reference key="3">
    <citation type="journal article" date="2004" name="Plant Cell">
        <title>Genome-wide analysis of Arabidopsis pentatricopeptide repeat proteins reveals their essential role in organelle biogenesis.</title>
        <authorList>
            <person name="Lurin C."/>
            <person name="Andres C."/>
            <person name="Aubourg S."/>
            <person name="Bellaoui M."/>
            <person name="Bitton F."/>
            <person name="Bruyere C."/>
            <person name="Caboche M."/>
            <person name="Debast C."/>
            <person name="Gualberto J."/>
            <person name="Hoffmann B."/>
            <person name="Lecharny A."/>
            <person name="Le Ret M."/>
            <person name="Martin-Magniette M.-L."/>
            <person name="Mireau H."/>
            <person name="Peeters N."/>
            <person name="Renou J.-P."/>
            <person name="Szurek B."/>
            <person name="Taconnat L."/>
            <person name="Small I."/>
        </authorList>
    </citation>
    <scope>GENE FAMILY</scope>
</reference>
<accession>Q9LQ15</accession>
<protein>
    <recommendedName>
        <fullName>Pentatricopeptide repeat-containing protein At1g62914, mitochondrial</fullName>
    </recommendedName>
</protein>
<dbReference type="EMBL" id="AC011000">
    <property type="protein sequence ID" value="AAF75802.1"/>
    <property type="molecule type" value="Genomic_DNA"/>
</dbReference>
<dbReference type="EMBL" id="CP002684">
    <property type="protein sequence ID" value="AEE34021.1"/>
    <property type="molecule type" value="Genomic_DNA"/>
</dbReference>
<dbReference type="PIR" id="G96653">
    <property type="entry name" value="G96653"/>
</dbReference>
<dbReference type="RefSeq" id="NP_001185295.1">
    <property type="nucleotide sequence ID" value="NM_001198366.2"/>
</dbReference>
<dbReference type="SMR" id="Q9LQ15"/>
<dbReference type="FunCoup" id="Q9LQ15">
    <property type="interactions" value="39"/>
</dbReference>
<dbReference type="PaxDb" id="3702-AT1G62914.1"/>
<dbReference type="ProteomicsDB" id="234867"/>
<dbReference type="EnsemblPlants" id="AT1G62914.1">
    <property type="protein sequence ID" value="AT1G62914.1"/>
    <property type="gene ID" value="AT1G62914"/>
</dbReference>
<dbReference type="GeneID" id="10723105"/>
<dbReference type="Gramene" id="AT1G62914.1">
    <property type="protein sequence ID" value="AT1G62914.1"/>
    <property type="gene ID" value="AT1G62914"/>
</dbReference>
<dbReference type="KEGG" id="ath:AT1G62914"/>
<dbReference type="Araport" id="AT1G62914"/>
<dbReference type="TAIR" id="AT1G62914"/>
<dbReference type="eggNOG" id="KOG4197">
    <property type="taxonomic scope" value="Eukaryota"/>
</dbReference>
<dbReference type="HOGENOM" id="CLU_002706_49_0_1"/>
<dbReference type="InParanoid" id="Q9LQ15"/>
<dbReference type="OMA" id="HCEAREL"/>
<dbReference type="PRO" id="PR:Q9LQ15"/>
<dbReference type="Proteomes" id="UP000006548">
    <property type="component" value="Chromosome 1"/>
</dbReference>
<dbReference type="ExpressionAtlas" id="Q9LQ15">
    <property type="expression patterns" value="baseline and differential"/>
</dbReference>
<dbReference type="GO" id="GO:0005739">
    <property type="term" value="C:mitochondrion"/>
    <property type="evidence" value="ECO:0007669"/>
    <property type="project" value="UniProtKB-SubCell"/>
</dbReference>
<dbReference type="FunFam" id="1.25.40.10:FF:000558">
    <property type="entry name" value="Pentatricopeptide repeat-containing protein At5g39710"/>
    <property type="match status" value="1"/>
</dbReference>
<dbReference type="Gene3D" id="1.25.40.10">
    <property type="entry name" value="Tetratricopeptide repeat domain"/>
    <property type="match status" value="5"/>
</dbReference>
<dbReference type="InterPro" id="IPR002885">
    <property type="entry name" value="Pentatricopeptide_rpt"/>
</dbReference>
<dbReference type="InterPro" id="IPR011990">
    <property type="entry name" value="TPR-like_helical_dom_sf"/>
</dbReference>
<dbReference type="NCBIfam" id="TIGR00756">
    <property type="entry name" value="PPR"/>
    <property type="match status" value="12"/>
</dbReference>
<dbReference type="PANTHER" id="PTHR47936:SF1">
    <property type="entry name" value="PENTATRICOPEPTIDE REPEAT-CONTAINING PROTEIN GUN1, CHLOROPLASTIC"/>
    <property type="match status" value="1"/>
</dbReference>
<dbReference type="PANTHER" id="PTHR47936">
    <property type="entry name" value="PPR_LONG DOMAIN-CONTAINING PROTEIN"/>
    <property type="match status" value="1"/>
</dbReference>
<dbReference type="Pfam" id="PF13041">
    <property type="entry name" value="PPR_2"/>
    <property type="match status" value="6"/>
</dbReference>
<dbReference type="SUPFAM" id="SSF81901">
    <property type="entry name" value="HCP-like"/>
    <property type="match status" value="1"/>
</dbReference>
<dbReference type="PROSITE" id="PS51375">
    <property type="entry name" value="PPR"/>
    <property type="match status" value="13"/>
</dbReference>
<sequence length="528" mass="59336">MLAKISSSAKRFVHRSLVVRGNAATFPLSFSFCRRRAFSGKTSYDYREVLRTGLSDIELDDAIGLFGVMAQSRPFPSIIEFSKLLSAIAKMNKFDLVISFGEKMEILGISHNLYTYNILINCFCRCSRLSLALALLGKMMKLGYEPDIVTLNSLLNGFCHGNRISDAVALVDQMVEMGYKPDTVTFTTLIHGLFLHNKASEAVALIDRMVQRGCQPDLVTYGAVVNGLCKRGDTDLALNLLNKMEAAKIEANVVIYSTVIDSLCKYRHEDDALNLFTEMENKGVRPNVITYSSLISCLCNYGRWSDASRLLSDMIERKINPNLVTFSALIDAFVKKGKLVKAEKLYEEMIKRSIDPNIFTYSSLINGFCMLDRLGEAKQMLELMIRKDCLPNVVTYNTLINGFCKAKRVDKGMELFREMSQRGLVGNTVTYTTLIHGFFQARDCDNAQMVFKQMVSVGVHPNILTYNILLDGLCKNGKLAKAMVVFEYLQRSTMEPDIYTYNIMIEGMCKAGKWKMGGIYFVASALKE</sequence>